<name>VSPA1_CROAT</name>
<organism>
    <name type="scientific">Crotalus atrox</name>
    <name type="common">Western diamondback rattlesnake</name>
    <dbReference type="NCBI Taxonomy" id="8730"/>
    <lineage>
        <taxon>Eukaryota</taxon>
        <taxon>Metazoa</taxon>
        <taxon>Chordata</taxon>
        <taxon>Craniata</taxon>
        <taxon>Vertebrata</taxon>
        <taxon>Euteleostomi</taxon>
        <taxon>Lepidosauria</taxon>
        <taxon>Squamata</taxon>
        <taxon>Bifurcata</taxon>
        <taxon>Unidentata</taxon>
        <taxon>Episquamata</taxon>
        <taxon>Toxicofera</taxon>
        <taxon>Serpentes</taxon>
        <taxon>Colubroidea</taxon>
        <taxon>Viperidae</taxon>
        <taxon>Crotalinae</taxon>
        <taxon>Crotalus</taxon>
    </lineage>
</organism>
<dbReference type="EC" id="3.4.21.-"/>
<dbReference type="PIR" id="A45655">
    <property type="entry name" value="A45655"/>
</dbReference>
<dbReference type="PIR" id="PC2214">
    <property type="entry name" value="PC2214"/>
</dbReference>
<dbReference type="GO" id="GO:0005615">
    <property type="term" value="C:extracellular space"/>
    <property type="evidence" value="ECO:0000314"/>
    <property type="project" value="UniProtKB"/>
</dbReference>
<dbReference type="GO" id="GO:0004252">
    <property type="term" value="F:serine-type endopeptidase activity"/>
    <property type="evidence" value="ECO:0000314"/>
    <property type="project" value="UniProtKB"/>
</dbReference>
<dbReference type="GO" id="GO:0090729">
    <property type="term" value="F:toxin activity"/>
    <property type="evidence" value="ECO:0007669"/>
    <property type="project" value="UniProtKB-KW"/>
</dbReference>
<dbReference type="GO" id="GO:0006508">
    <property type="term" value="P:proteolysis"/>
    <property type="evidence" value="ECO:0007669"/>
    <property type="project" value="UniProtKB-KW"/>
</dbReference>
<accession>Q9PRW4</accession>
<accession>Q9PS55</accession>
<protein>
    <recommendedName>
        <fullName>Alpha-fibrinogenase A1</fullName>
        <ecNumber>3.4.21.-</ecNumber>
    </recommendedName>
    <alternativeName>
        <fullName>Snake venom serine protease</fullName>
        <shortName>SVSP</shortName>
    </alternativeName>
</protein>
<proteinExistence type="evidence at protein level"/>
<feature type="chain" id="PRO_0000406904" description="Alpha-fibrinogenase A1">
    <location>
        <begin position="1"/>
        <end position="21" status="greater than"/>
    </location>
</feature>
<feature type="disulfide bond">
    <location>
        <begin position="7"/>
        <end status="unknown"/>
    </location>
</feature>
<feature type="sequence conflict" description="In Ref. 2; AA sequence." evidence="4" ref="2">
    <original>S</original>
    <variation>F</variation>
    <location>
        <position position="14"/>
    </location>
</feature>
<feature type="sequence conflict" description="In Ref. 2; AA sequence." evidence="4" ref="2">
    <original>F</original>
    <variation>Y</variation>
    <location>
        <position position="19"/>
    </location>
</feature>
<feature type="non-terminal residue">
    <location>
        <position position="21"/>
    </location>
</feature>
<reference key="1">
    <citation type="journal article" date="1994" name="Biochem. Biophys. Res. Commun.">
        <title>Isolation of multiple isoforms of alpha-fibrinogenase from the Western diamondback rattlesnake, Crotalus atrox: N-terminal sequence homology with ancrod, an antithrombotic agent from Malayan viper.</title>
        <authorList>
            <person name="Hung C.C."/>
            <person name="Chiou S.H."/>
        </authorList>
    </citation>
    <scope>PROTEIN SEQUENCE</scope>
    <scope>FUNCTION</scope>
    <scope>ACTIVITY REGULATION</scope>
    <scope>SUBUNIT</scope>
    <scope>SUBCELLULAR LOCATION</scope>
    <scope>TISSUE SPECIFICITY</scope>
    <source>
        <tissue>Venom</tissue>
    </source>
</reference>
<reference key="2">
    <citation type="journal article" date="1992" name="Biochem. Int.">
        <title>Isolation of a crotalase-like protease with alpha-fibrinogenase activity from the Western diamondback rattlesnake, Crotalus atrox.</title>
        <authorList>
            <person name="Chiou S.H."/>
            <person name="Hung C.C."/>
            <person name="Lin C.W."/>
        </authorList>
    </citation>
    <scope>PROTEIN SEQUENCE OF 1-20</scope>
    <scope>ACTIVITY REGULATION</scope>
    <scope>SUBUNIT</scope>
    <source>
        <tissue>Venom</tissue>
    </source>
</reference>
<reference key="3">
    <citation type="journal article" date="2009" name="J. Proteome Res.">
        <title>Exploring the venom proteome of the western diamondback rattlesnake, Crotalus atrox, via snake venomics and combinatorial peptide ligand library approaches.</title>
        <authorList>
            <person name="Calvete J.J."/>
            <person name="Fasoli E."/>
            <person name="Sanz L."/>
            <person name="Boschetti E."/>
            <person name="Righetti P.G."/>
        </authorList>
    </citation>
    <scope>PROTEIN SEQUENCE OF 1-15</scope>
    <scope>IDENTIFICATION BY MASS SPECTROMETRY</scope>
    <source>
        <tissue>Venom</tissue>
    </source>
</reference>
<evidence type="ECO:0000255" key="1">
    <source>
        <dbReference type="PROSITE-ProRule" id="PRU00274"/>
    </source>
</evidence>
<evidence type="ECO:0000269" key="2">
    <source>
    </source>
</evidence>
<evidence type="ECO:0000269" key="3">
    <source>
    </source>
</evidence>
<evidence type="ECO:0000305" key="4"/>
<comment type="function">
    <text evidence="3">Snake venom serine protease that completely cleaves fibrinogen Aalpha chain (FGA), partially cleaves Bbeta chain (FGB) and has no activity on gamma chain. Is more potent that A2 and A3 alpha-fibrinogenases. Very active within 5 minutes.</text>
</comment>
<comment type="activity regulation">
    <text evidence="2 3">Inhibited by PMSF, bovine aprotinin (APR), and soybean trypsin inhibitor (STI). Is not inhibited by EDTA, beta-mercaptoethanol, and high temperature (85 degrees Celsius).</text>
</comment>
<comment type="subunit">
    <text evidence="2 3">Monomer.</text>
</comment>
<comment type="subcellular location">
    <subcellularLocation>
        <location evidence="3">Secreted</location>
    </subcellularLocation>
</comment>
<comment type="tissue specificity">
    <text evidence="3">Expressed by the venom gland.</text>
</comment>
<comment type="similarity">
    <text evidence="1">Belongs to the peptidase S1 family. Snake venom subfamily.</text>
</comment>
<keyword id="KW-0903">Direct protein sequencing</keyword>
<keyword id="KW-1015">Disulfide bond</keyword>
<keyword id="KW-1206">Fibrinogenolytic toxin</keyword>
<keyword id="KW-1199">Hemostasis impairing toxin</keyword>
<keyword id="KW-0378">Hydrolase</keyword>
<keyword id="KW-0645">Protease</keyword>
<keyword id="KW-0964">Secreted</keyword>
<keyword id="KW-0720">Serine protease</keyword>
<keyword id="KW-0800">Toxin</keyword>
<sequence>VIGGDECNINEHRSLVAIFDS</sequence>